<sequence>MRIGVVGDPDVVVGFRLAGLTDVYEVKSPEQAAKAIEELNSNSEIGLIITTERIGEEIRDTISGVKKVVVEVPDKNGPIVRENDPVKVLVRNAVGVDIK</sequence>
<comment type="function">
    <text evidence="1">Component of the A-type ATP synthase that produces ATP from ADP in the presence of a proton gradient across the membrane.</text>
</comment>
<comment type="subunit">
    <text evidence="1">Has multiple subunits with at least A(3), B(3), C, D, E, F, H, I and proteolipid K(x).</text>
</comment>
<comment type="subcellular location">
    <subcellularLocation>
        <location evidence="1">Cell membrane</location>
        <topology evidence="1">Peripheral membrane protein</topology>
    </subcellularLocation>
</comment>
<comment type="similarity">
    <text evidence="1">Belongs to the V-ATPase F subunit family.</text>
</comment>
<dbReference type="EMBL" id="CP000745">
    <property type="protein sequence ID" value="ABR65367.1"/>
    <property type="molecule type" value="Genomic_DNA"/>
</dbReference>
<dbReference type="SMR" id="A6VFZ1"/>
<dbReference type="STRING" id="426368.MmarC7_0297"/>
<dbReference type="KEGG" id="mmz:MmarC7_0297"/>
<dbReference type="eggNOG" id="arCOG04102">
    <property type="taxonomic scope" value="Archaea"/>
</dbReference>
<dbReference type="HOGENOM" id="CLU_135754_2_2_2"/>
<dbReference type="OrthoDB" id="24971at2157"/>
<dbReference type="GO" id="GO:0005886">
    <property type="term" value="C:plasma membrane"/>
    <property type="evidence" value="ECO:0007669"/>
    <property type="project" value="UniProtKB-SubCell"/>
</dbReference>
<dbReference type="GO" id="GO:0005524">
    <property type="term" value="F:ATP binding"/>
    <property type="evidence" value="ECO:0007669"/>
    <property type="project" value="UniProtKB-UniRule"/>
</dbReference>
<dbReference type="GO" id="GO:0046933">
    <property type="term" value="F:proton-transporting ATP synthase activity, rotational mechanism"/>
    <property type="evidence" value="ECO:0007669"/>
    <property type="project" value="UniProtKB-UniRule"/>
</dbReference>
<dbReference type="GO" id="GO:0046961">
    <property type="term" value="F:proton-transporting ATPase activity, rotational mechanism"/>
    <property type="evidence" value="ECO:0007669"/>
    <property type="project" value="InterPro"/>
</dbReference>
<dbReference type="GO" id="GO:0042777">
    <property type="term" value="P:proton motive force-driven plasma membrane ATP synthesis"/>
    <property type="evidence" value="ECO:0007669"/>
    <property type="project" value="UniProtKB-UniRule"/>
</dbReference>
<dbReference type="Gene3D" id="3.40.50.10580">
    <property type="entry name" value="ATPase, V1 complex, subunit F"/>
    <property type="match status" value="1"/>
</dbReference>
<dbReference type="HAMAP" id="MF_00312">
    <property type="entry name" value="ATP_synth_F_arch"/>
    <property type="match status" value="1"/>
</dbReference>
<dbReference type="InterPro" id="IPR008218">
    <property type="entry name" value="ATPase_V1-cplx_f_g_su"/>
</dbReference>
<dbReference type="InterPro" id="IPR022944">
    <property type="entry name" value="ATPase_V1-cplx_fsu_bac/arc"/>
</dbReference>
<dbReference type="InterPro" id="IPR036906">
    <property type="entry name" value="ATPase_V1_fsu_sf"/>
</dbReference>
<dbReference type="NCBIfam" id="NF003047">
    <property type="entry name" value="PRK03957.1"/>
    <property type="match status" value="1"/>
</dbReference>
<dbReference type="Pfam" id="PF01990">
    <property type="entry name" value="ATP-synt_F"/>
    <property type="match status" value="1"/>
</dbReference>
<dbReference type="SUPFAM" id="SSF159468">
    <property type="entry name" value="AtpF-like"/>
    <property type="match status" value="1"/>
</dbReference>
<keyword id="KW-0066">ATP synthesis</keyword>
<keyword id="KW-1003">Cell membrane</keyword>
<keyword id="KW-0375">Hydrogen ion transport</keyword>
<keyword id="KW-0406">Ion transport</keyword>
<keyword id="KW-0472">Membrane</keyword>
<keyword id="KW-0813">Transport</keyword>
<reference key="1">
    <citation type="submission" date="2007-06" db="EMBL/GenBank/DDBJ databases">
        <title>Complete sequence of Methanococcus maripaludis C7.</title>
        <authorList>
            <consortium name="US DOE Joint Genome Institute"/>
            <person name="Copeland A."/>
            <person name="Lucas S."/>
            <person name="Lapidus A."/>
            <person name="Barry K."/>
            <person name="Glavina del Rio T."/>
            <person name="Dalin E."/>
            <person name="Tice H."/>
            <person name="Pitluck S."/>
            <person name="Clum A."/>
            <person name="Schmutz J."/>
            <person name="Larimer F."/>
            <person name="Land M."/>
            <person name="Hauser L."/>
            <person name="Kyrpides N."/>
            <person name="Anderson I."/>
            <person name="Sieprawska-Lupa M."/>
            <person name="Whitman W.B."/>
            <person name="Richardson P."/>
        </authorList>
    </citation>
    <scope>NUCLEOTIDE SEQUENCE [LARGE SCALE GENOMIC DNA]</scope>
    <source>
        <strain>C7 / ATCC BAA-1331</strain>
    </source>
</reference>
<evidence type="ECO:0000255" key="1">
    <source>
        <dbReference type="HAMAP-Rule" id="MF_00312"/>
    </source>
</evidence>
<accession>A6VFZ1</accession>
<protein>
    <recommendedName>
        <fullName evidence="1">A-type ATP synthase subunit F</fullName>
    </recommendedName>
</protein>
<organism>
    <name type="scientific">Methanococcus maripaludis (strain C7 / ATCC BAA-1331)</name>
    <dbReference type="NCBI Taxonomy" id="426368"/>
    <lineage>
        <taxon>Archaea</taxon>
        <taxon>Methanobacteriati</taxon>
        <taxon>Methanobacteriota</taxon>
        <taxon>Methanomada group</taxon>
        <taxon>Methanococci</taxon>
        <taxon>Methanococcales</taxon>
        <taxon>Methanococcaceae</taxon>
        <taxon>Methanococcus</taxon>
    </lineage>
</organism>
<proteinExistence type="inferred from homology"/>
<name>AATF_METM7</name>
<gene>
    <name evidence="1" type="primary">atpF</name>
    <name type="ordered locus">MmarC7_0297</name>
</gene>
<feature type="chain" id="PRO_1000059432" description="A-type ATP synthase subunit F">
    <location>
        <begin position="1"/>
        <end position="99"/>
    </location>
</feature>